<sequence length="271" mass="28990">MANYTAADVKRLRELTGAGMMDSKNALVEAEGDFDKAVELLRIKGAKDVGKRAERATAEGLVAAKDGALIELNSETDFVAKNAEFQAVAEQIVAAAAAAKATDVDALKAAKLGDTTVEQTIADLSAKIGEKLELRRATYFDGQVETYLHKRAADLPPAVGVLVEYTGDDKSAAHAVALQIAALKAKYLTREDVPEDIVANERRIAEETARAEGKPEQALTKIVEGRVTGFYKDVVLLDQPSVSDNKKSVKALLDEAGVTVTRFARFEVGQA</sequence>
<evidence type="ECO:0000255" key="1">
    <source>
        <dbReference type="HAMAP-Rule" id="MF_00050"/>
    </source>
</evidence>
<dbReference type="EMBL" id="CP000656">
    <property type="protein sequence ID" value="ABP46602.1"/>
    <property type="molecule type" value="Genomic_DNA"/>
</dbReference>
<dbReference type="SMR" id="A4TC66"/>
<dbReference type="STRING" id="350054.Mflv_4132"/>
<dbReference type="KEGG" id="mgi:Mflv_4132"/>
<dbReference type="eggNOG" id="COG0264">
    <property type="taxonomic scope" value="Bacteria"/>
</dbReference>
<dbReference type="HOGENOM" id="CLU_047155_0_0_11"/>
<dbReference type="OrthoDB" id="9808348at2"/>
<dbReference type="GO" id="GO:0005737">
    <property type="term" value="C:cytoplasm"/>
    <property type="evidence" value="ECO:0007669"/>
    <property type="project" value="UniProtKB-SubCell"/>
</dbReference>
<dbReference type="GO" id="GO:0003746">
    <property type="term" value="F:translation elongation factor activity"/>
    <property type="evidence" value="ECO:0007669"/>
    <property type="project" value="UniProtKB-UniRule"/>
</dbReference>
<dbReference type="CDD" id="cd14275">
    <property type="entry name" value="UBA_EF-Ts"/>
    <property type="match status" value="1"/>
</dbReference>
<dbReference type="FunFam" id="1.10.286.20:FF:000001">
    <property type="entry name" value="Elongation factor Ts"/>
    <property type="match status" value="1"/>
</dbReference>
<dbReference type="FunFam" id="1.10.8.10:FF:000001">
    <property type="entry name" value="Elongation factor Ts"/>
    <property type="match status" value="1"/>
</dbReference>
<dbReference type="Gene3D" id="1.10.286.20">
    <property type="match status" value="1"/>
</dbReference>
<dbReference type="Gene3D" id="1.10.8.10">
    <property type="entry name" value="DNA helicase RuvA subunit, C-terminal domain"/>
    <property type="match status" value="1"/>
</dbReference>
<dbReference type="Gene3D" id="3.30.479.20">
    <property type="entry name" value="Elongation factor Ts, dimerisation domain"/>
    <property type="match status" value="2"/>
</dbReference>
<dbReference type="HAMAP" id="MF_00050">
    <property type="entry name" value="EF_Ts"/>
    <property type="match status" value="1"/>
</dbReference>
<dbReference type="InterPro" id="IPR036402">
    <property type="entry name" value="EF-Ts_dimer_sf"/>
</dbReference>
<dbReference type="InterPro" id="IPR001816">
    <property type="entry name" value="Transl_elong_EFTs/EF1B"/>
</dbReference>
<dbReference type="InterPro" id="IPR014039">
    <property type="entry name" value="Transl_elong_EFTs/EF1B_dimer"/>
</dbReference>
<dbReference type="InterPro" id="IPR018101">
    <property type="entry name" value="Transl_elong_Ts_CS"/>
</dbReference>
<dbReference type="InterPro" id="IPR009060">
    <property type="entry name" value="UBA-like_sf"/>
</dbReference>
<dbReference type="NCBIfam" id="TIGR00116">
    <property type="entry name" value="tsf"/>
    <property type="match status" value="1"/>
</dbReference>
<dbReference type="PANTHER" id="PTHR11741">
    <property type="entry name" value="ELONGATION FACTOR TS"/>
    <property type="match status" value="1"/>
</dbReference>
<dbReference type="PANTHER" id="PTHR11741:SF0">
    <property type="entry name" value="ELONGATION FACTOR TS, MITOCHONDRIAL"/>
    <property type="match status" value="1"/>
</dbReference>
<dbReference type="Pfam" id="PF00889">
    <property type="entry name" value="EF_TS"/>
    <property type="match status" value="1"/>
</dbReference>
<dbReference type="SUPFAM" id="SSF54713">
    <property type="entry name" value="Elongation factor Ts (EF-Ts), dimerisation domain"/>
    <property type="match status" value="1"/>
</dbReference>
<dbReference type="SUPFAM" id="SSF46934">
    <property type="entry name" value="UBA-like"/>
    <property type="match status" value="1"/>
</dbReference>
<dbReference type="PROSITE" id="PS01126">
    <property type="entry name" value="EF_TS_1"/>
    <property type="match status" value="1"/>
</dbReference>
<dbReference type="PROSITE" id="PS01127">
    <property type="entry name" value="EF_TS_2"/>
    <property type="match status" value="1"/>
</dbReference>
<accession>A4TC66</accession>
<feature type="chain" id="PRO_1000074869" description="Elongation factor Ts">
    <location>
        <begin position="1"/>
        <end position="271"/>
    </location>
</feature>
<feature type="region of interest" description="Involved in Mg(2+) ion dislocation from EF-Tu" evidence="1">
    <location>
        <begin position="76"/>
        <end position="79"/>
    </location>
</feature>
<comment type="function">
    <text evidence="1">Associates with the EF-Tu.GDP complex and induces the exchange of GDP to GTP. It remains bound to the aminoacyl-tRNA.EF-Tu.GTP complex up to the GTP hydrolysis stage on the ribosome.</text>
</comment>
<comment type="subcellular location">
    <subcellularLocation>
        <location evidence="1">Cytoplasm</location>
    </subcellularLocation>
</comment>
<comment type="similarity">
    <text evidence="1">Belongs to the EF-Ts family.</text>
</comment>
<proteinExistence type="inferred from homology"/>
<keyword id="KW-0963">Cytoplasm</keyword>
<keyword id="KW-0251">Elongation factor</keyword>
<keyword id="KW-0648">Protein biosynthesis</keyword>
<gene>
    <name evidence="1" type="primary">tsf</name>
    <name type="ordered locus">Mflv_4132</name>
</gene>
<name>EFTS_MYCGI</name>
<organism>
    <name type="scientific">Mycolicibacterium gilvum (strain PYR-GCK)</name>
    <name type="common">Mycobacterium gilvum (strain PYR-GCK)</name>
    <dbReference type="NCBI Taxonomy" id="350054"/>
    <lineage>
        <taxon>Bacteria</taxon>
        <taxon>Bacillati</taxon>
        <taxon>Actinomycetota</taxon>
        <taxon>Actinomycetes</taxon>
        <taxon>Mycobacteriales</taxon>
        <taxon>Mycobacteriaceae</taxon>
        <taxon>Mycolicibacterium</taxon>
    </lineage>
</organism>
<reference key="1">
    <citation type="submission" date="2007-04" db="EMBL/GenBank/DDBJ databases">
        <title>Complete sequence of chromosome of Mycobacterium gilvum PYR-GCK.</title>
        <authorList>
            <consortium name="US DOE Joint Genome Institute"/>
            <person name="Copeland A."/>
            <person name="Lucas S."/>
            <person name="Lapidus A."/>
            <person name="Barry K."/>
            <person name="Detter J.C."/>
            <person name="Glavina del Rio T."/>
            <person name="Hammon N."/>
            <person name="Israni S."/>
            <person name="Dalin E."/>
            <person name="Tice H."/>
            <person name="Pitluck S."/>
            <person name="Chain P."/>
            <person name="Malfatti S."/>
            <person name="Shin M."/>
            <person name="Vergez L."/>
            <person name="Schmutz J."/>
            <person name="Larimer F."/>
            <person name="Land M."/>
            <person name="Hauser L."/>
            <person name="Kyrpides N."/>
            <person name="Mikhailova N."/>
            <person name="Miller C."/>
            <person name="Richardson P."/>
        </authorList>
    </citation>
    <scope>NUCLEOTIDE SEQUENCE [LARGE SCALE GENOMIC DNA]</scope>
    <source>
        <strain>PYR-GCK</strain>
    </source>
</reference>
<protein>
    <recommendedName>
        <fullName evidence="1">Elongation factor Ts</fullName>
        <shortName evidence="1">EF-Ts</shortName>
    </recommendedName>
</protein>